<evidence type="ECO:0000250" key="1"/>
<evidence type="ECO:0000250" key="2">
    <source>
        <dbReference type="UniProtKB" id="P07371"/>
    </source>
</evidence>
<evidence type="ECO:0000250" key="3">
    <source>
        <dbReference type="UniProtKB" id="P12333"/>
    </source>
</evidence>
<evidence type="ECO:0000255" key="4"/>
<evidence type="ECO:0000269" key="5">
    <source>
    </source>
</evidence>
<evidence type="ECO:0000305" key="6"/>
<evidence type="ECO:0007829" key="7">
    <source>
        <dbReference type="PDB" id="7OUI"/>
    </source>
</evidence>
<dbReference type="EMBL" id="X03909">
    <property type="protein sequence ID" value="CAA27543.1"/>
    <property type="molecule type" value="Genomic_DNA"/>
</dbReference>
<dbReference type="EMBL" id="AC008030">
    <property type="protein sequence ID" value="AAG10603.1"/>
    <property type="molecule type" value="Genomic_DNA"/>
</dbReference>
<dbReference type="EMBL" id="CP002684">
    <property type="protein sequence ID" value="AEE31151.1"/>
    <property type="molecule type" value="Genomic_DNA"/>
</dbReference>
<dbReference type="EMBL" id="AF428359">
    <property type="protein sequence ID" value="AAL16289.1"/>
    <property type="molecule type" value="mRNA"/>
</dbReference>
<dbReference type="EMBL" id="AY045673">
    <property type="protein sequence ID" value="AAK74031.1"/>
    <property type="molecule type" value="mRNA"/>
</dbReference>
<dbReference type="EMBL" id="AY050935">
    <property type="protein sequence ID" value="AAK93612.1"/>
    <property type="molecule type" value="mRNA"/>
</dbReference>
<dbReference type="EMBL" id="AY058180">
    <property type="protein sequence ID" value="AAL25594.1"/>
    <property type="molecule type" value="mRNA"/>
</dbReference>
<dbReference type="EMBL" id="AY091169">
    <property type="protein sequence ID" value="AAM14108.1"/>
    <property type="molecule type" value="mRNA"/>
</dbReference>
<dbReference type="EMBL" id="X15221">
    <property type="protein sequence ID" value="CAA33290.1"/>
    <property type="molecule type" value="Genomic_DNA"/>
</dbReference>
<dbReference type="EMBL" id="X15222">
    <property type="protein sequence ID" value="CAA33291.1"/>
    <property type="molecule type" value="Genomic_DNA"/>
</dbReference>
<dbReference type="EMBL" id="Z17799">
    <property type="protein sequence ID" value="CAA79075.1"/>
    <property type="molecule type" value="mRNA"/>
</dbReference>
<dbReference type="PIR" id="A86423">
    <property type="entry name" value="A86423"/>
</dbReference>
<dbReference type="RefSeq" id="NP_174286.1">
    <property type="nucleotide sequence ID" value="NM_102733.3"/>
</dbReference>
<dbReference type="PDB" id="5MDX">
    <property type="method" value="EM"/>
    <property type="resolution" value="5.30 A"/>
    <property type="chains" value="1/2/3/5/6/7/G/N/Y/g/n/y=44-267"/>
</dbReference>
<dbReference type="PDB" id="7OUI">
    <property type="method" value="EM"/>
    <property type="resolution" value="2.79 A"/>
    <property type="chains" value="G/N/Y/g/n/y=36-267"/>
</dbReference>
<dbReference type="PDBsum" id="5MDX"/>
<dbReference type="PDBsum" id="7OUI"/>
<dbReference type="EMDB" id="EMD-13078"/>
<dbReference type="EMDB" id="EMD-3491"/>
<dbReference type="SMR" id="P04778"/>
<dbReference type="BioGRID" id="25106">
    <property type="interactions" value="10"/>
</dbReference>
<dbReference type="FunCoup" id="P04778">
    <property type="interactions" value="563"/>
</dbReference>
<dbReference type="IntAct" id="P04778">
    <property type="interactions" value="21"/>
</dbReference>
<dbReference type="STRING" id="3702.P04778"/>
<dbReference type="iPTMnet" id="P04778"/>
<dbReference type="PaxDb" id="3702-AT1G29930.1"/>
<dbReference type="ProteomicsDB" id="239126"/>
<dbReference type="EnsemblPlants" id="AT1G29930.1">
    <property type="protein sequence ID" value="AT1G29930.1"/>
    <property type="gene ID" value="AT1G29930"/>
</dbReference>
<dbReference type="GeneID" id="839871"/>
<dbReference type="Gramene" id="AT1G29930.1">
    <property type="protein sequence ID" value="AT1G29930.1"/>
    <property type="gene ID" value="AT1G29930"/>
</dbReference>
<dbReference type="KEGG" id="ath:AT1G29930"/>
<dbReference type="Araport" id="AT1G29930"/>
<dbReference type="TAIR" id="AT1G29930">
    <property type="gene designation" value="CAB1"/>
</dbReference>
<dbReference type="eggNOG" id="ENOG502QPU1">
    <property type="taxonomic scope" value="Eukaryota"/>
</dbReference>
<dbReference type="HOGENOM" id="CLU_057943_2_0_1"/>
<dbReference type="InParanoid" id="P04778"/>
<dbReference type="OMA" id="EAINHIP"/>
<dbReference type="OrthoDB" id="423598at2759"/>
<dbReference type="PhylomeDB" id="P04778"/>
<dbReference type="PRO" id="PR:P04778"/>
<dbReference type="Proteomes" id="UP000006548">
    <property type="component" value="Chromosome 1"/>
</dbReference>
<dbReference type="ExpressionAtlas" id="P04778">
    <property type="expression patterns" value="baseline and differential"/>
</dbReference>
<dbReference type="GO" id="GO:0009507">
    <property type="term" value="C:chloroplast"/>
    <property type="evidence" value="ECO:0007005"/>
    <property type="project" value="TAIR"/>
</dbReference>
<dbReference type="GO" id="GO:0009534">
    <property type="term" value="C:chloroplast thylakoid"/>
    <property type="evidence" value="ECO:0007005"/>
    <property type="project" value="TAIR"/>
</dbReference>
<dbReference type="GO" id="GO:0009535">
    <property type="term" value="C:chloroplast thylakoid membrane"/>
    <property type="evidence" value="ECO:0007005"/>
    <property type="project" value="TAIR"/>
</dbReference>
<dbReference type="GO" id="GO:0005634">
    <property type="term" value="C:nucleus"/>
    <property type="evidence" value="ECO:0007005"/>
    <property type="project" value="TAIR"/>
</dbReference>
<dbReference type="GO" id="GO:0009522">
    <property type="term" value="C:photosystem I"/>
    <property type="evidence" value="ECO:0007669"/>
    <property type="project" value="UniProtKB-KW"/>
</dbReference>
<dbReference type="GO" id="GO:0009523">
    <property type="term" value="C:photosystem II"/>
    <property type="evidence" value="ECO:0007669"/>
    <property type="project" value="UniProtKB-KW"/>
</dbReference>
<dbReference type="GO" id="GO:0009579">
    <property type="term" value="C:thylakoid"/>
    <property type="evidence" value="ECO:0007005"/>
    <property type="project" value="TAIR"/>
</dbReference>
<dbReference type="GO" id="GO:0016168">
    <property type="term" value="F:chlorophyll binding"/>
    <property type="evidence" value="ECO:0000304"/>
    <property type="project" value="TAIR"/>
</dbReference>
<dbReference type="GO" id="GO:0046872">
    <property type="term" value="F:metal ion binding"/>
    <property type="evidence" value="ECO:0007669"/>
    <property type="project" value="UniProtKB-KW"/>
</dbReference>
<dbReference type="GO" id="GO:0003729">
    <property type="term" value="F:mRNA binding"/>
    <property type="evidence" value="ECO:0000314"/>
    <property type="project" value="TAIR"/>
</dbReference>
<dbReference type="GO" id="GO:0019904">
    <property type="term" value="F:protein domain specific binding"/>
    <property type="evidence" value="ECO:0000353"/>
    <property type="project" value="CAFA"/>
</dbReference>
<dbReference type="GO" id="GO:0009765">
    <property type="term" value="P:photosynthesis, light harvesting"/>
    <property type="evidence" value="ECO:0007669"/>
    <property type="project" value="InterPro"/>
</dbReference>
<dbReference type="FunFam" id="1.10.3460.10:FF:000001">
    <property type="entry name" value="Chlorophyll a-b binding protein, chloroplastic"/>
    <property type="match status" value="1"/>
</dbReference>
<dbReference type="Gene3D" id="1.10.3460.10">
    <property type="entry name" value="Chlorophyll a/b binding protein domain"/>
    <property type="match status" value="1"/>
</dbReference>
<dbReference type="InterPro" id="IPR001344">
    <property type="entry name" value="Chloro_AB-bd_pln"/>
</dbReference>
<dbReference type="InterPro" id="IPR022796">
    <property type="entry name" value="Chloroa_b-bind"/>
</dbReference>
<dbReference type="PANTHER" id="PTHR21649">
    <property type="entry name" value="CHLOROPHYLL A/B BINDING PROTEIN"/>
    <property type="match status" value="1"/>
</dbReference>
<dbReference type="Pfam" id="PF00504">
    <property type="entry name" value="Chloroa_b-bind"/>
    <property type="match status" value="1"/>
</dbReference>
<dbReference type="SUPFAM" id="SSF103511">
    <property type="entry name" value="Chlorophyll a-b binding protein"/>
    <property type="match status" value="1"/>
</dbReference>
<organism>
    <name type="scientific">Arabidopsis thaliana</name>
    <name type="common">Mouse-ear cress</name>
    <dbReference type="NCBI Taxonomy" id="3702"/>
    <lineage>
        <taxon>Eukaryota</taxon>
        <taxon>Viridiplantae</taxon>
        <taxon>Streptophyta</taxon>
        <taxon>Embryophyta</taxon>
        <taxon>Tracheophyta</taxon>
        <taxon>Spermatophyta</taxon>
        <taxon>Magnoliopsida</taxon>
        <taxon>eudicotyledons</taxon>
        <taxon>Gunneridae</taxon>
        <taxon>Pentapetalae</taxon>
        <taxon>rosids</taxon>
        <taxon>malvids</taxon>
        <taxon>Brassicales</taxon>
        <taxon>Brassicaceae</taxon>
        <taxon>Camelineae</taxon>
        <taxon>Arabidopsis</taxon>
    </lineage>
</organism>
<name>CB1C_ARATH</name>
<reference key="1">
    <citation type="journal article" date="1986" name="Nucleic Acids Res.">
        <title>Structure and expression of three light-harvesting chlorophyll a/b-binding protein genes in Arabidopsis thaliana.</title>
        <authorList>
            <person name="Leutwiler L.S."/>
            <person name="Meyerowitz E.M."/>
            <person name="Tobin E.M."/>
        </authorList>
    </citation>
    <scope>NUCLEOTIDE SEQUENCE [GENOMIC DNA]</scope>
</reference>
<reference key="2">
    <citation type="journal article" date="2000" name="Nature">
        <title>Sequence and analysis of chromosome 1 of the plant Arabidopsis thaliana.</title>
        <authorList>
            <person name="Theologis A."/>
            <person name="Ecker J.R."/>
            <person name="Palm C.J."/>
            <person name="Federspiel N.A."/>
            <person name="Kaul S."/>
            <person name="White O."/>
            <person name="Alonso J."/>
            <person name="Altafi H."/>
            <person name="Araujo R."/>
            <person name="Bowman C.L."/>
            <person name="Brooks S.Y."/>
            <person name="Buehler E."/>
            <person name="Chan A."/>
            <person name="Chao Q."/>
            <person name="Chen H."/>
            <person name="Cheuk R.F."/>
            <person name="Chin C.W."/>
            <person name="Chung M.K."/>
            <person name="Conn L."/>
            <person name="Conway A.B."/>
            <person name="Conway A.R."/>
            <person name="Creasy T.H."/>
            <person name="Dewar K."/>
            <person name="Dunn P."/>
            <person name="Etgu P."/>
            <person name="Feldblyum T.V."/>
            <person name="Feng J.-D."/>
            <person name="Fong B."/>
            <person name="Fujii C.Y."/>
            <person name="Gill J.E."/>
            <person name="Goldsmith A.D."/>
            <person name="Haas B."/>
            <person name="Hansen N.F."/>
            <person name="Hughes B."/>
            <person name="Huizar L."/>
            <person name="Hunter J.L."/>
            <person name="Jenkins J."/>
            <person name="Johnson-Hopson C."/>
            <person name="Khan S."/>
            <person name="Khaykin E."/>
            <person name="Kim C.J."/>
            <person name="Koo H.L."/>
            <person name="Kremenetskaia I."/>
            <person name="Kurtz D.B."/>
            <person name="Kwan A."/>
            <person name="Lam B."/>
            <person name="Langin-Hooper S."/>
            <person name="Lee A."/>
            <person name="Lee J.M."/>
            <person name="Lenz C.A."/>
            <person name="Li J.H."/>
            <person name="Li Y.-P."/>
            <person name="Lin X."/>
            <person name="Liu S.X."/>
            <person name="Liu Z.A."/>
            <person name="Luros J.S."/>
            <person name="Maiti R."/>
            <person name="Marziali A."/>
            <person name="Militscher J."/>
            <person name="Miranda M."/>
            <person name="Nguyen M."/>
            <person name="Nierman W.C."/>
            <person name="Osborne B.I."/>
            <person name="Pai G."/>
            <person name="Peterson J."/>
            <person name="Pham P.K."/>
            <person name="Rizzo M."/>
            <person name="Rooney T."/>
            <person name="Rowley D."/>
            <person name="Sakano H."/>
            <person name="Salzberg S.L."/>
            <person name="Schwartz J.R."/>
            <person name="Shinn P."/>
            <person name="Southwick A.M."/>
            <person name="Sun H."/>
            <person name="Tallon L.J."/>
            <person name="Tambunga G."/>
            <person name="Toriumi M.J."/>
            <person name="Town C.D."/>
            <person name="Utterback T."/>
            <person name="Van Aken S."/>
            <person name="Vaysberg M."/>
            <person name="Vysotskaia V.S."/>
            <person name="Walker M."/>
            <person name="Wu D."/>
            <person name="Yu G."/>
            <person name="Fraser C.M."/>
            <person name="Venter J.C."/>
            <person name="Davis R.W."/>
        </authorList>
    </citation>
    <scope>NUCLEOTIDE SEQUENCE [LARGE SCALE GENOMIC DNA]</scope>
    <source>
        <strain>cv. Columbia</strain>
    </source>
</reference>
<reference key="3">
    <citation type="journal article" date="2017" name="Plant J.">
        <title>Araport11: a complete reannotation of the Arabidopsis thaliana reference genome.</title>
        <authorList>
            <person name="Cheng C.Y."/>
            <person name="Krishnakumar V."/>
            <person name="Chan A.P."/>
            <person name="Thibaud-Nissen F."/>
            <person name="Schobel S."/>
            <person name="Town C.D."/>
        </authorList>
    </citation>
    <scope>GENOME REANNOTATION</scope>
    <source>
        <strain>cv. Columbia</strain>
    </source>
</reference>
<reference key="4">
    <citation type="journal article" date="2003" name="Science">
        <title>Empirical analysis of transcriptional activity in the Arabidopsis genome.</title>
        <authorList>
            <person name="Yamada K."/>
            <person name="Lim J."/>
            <person name="Dale J.M."/>
            <person name="Chen H."/>
            <person name="Shinn P."/>
            <person name="Palm C.J."/>
            <person name="Southwick A.M."/>
            <person name="Wu H.C."/>
            <person name="Kim C.J."/>
            <person name="Nguyen M."/>
            <person name="Pham P.K."/>
            <person name="Cheuk R.F."/>
            <person name="Karlin-Newmann G."/>
            <person name="Liu S.X."/>
            <person name="Lam B."/>
            <person name="Sakano H."/>
            <person name="Wu T."/>
            <person name="Yu G."/>
            <person name="Miranda M."/>
            <person name="Quach H.L."/>
            <person name="Tripp M."/>
            <person name="Chang C.H."/>
            <person name="Lee J.M."/>
            <person name="Toriumi M.J."/>
            <person name="Chan M.M."/>
            <person name="Tang C.C."/>
            <person name="Onodera C.S."/>
            <person name="Deng J.M."/>
            <person name="Akiyama K."/>
            <person name="Ansari Y."/>
            <person name="Arakawa T."/>
            <person name="Banh J."/>
            <person name="Banno F."/>
            <person name="Bowser L."/>
            <person name="Brooks S.Y."/>
            <person name="Carninci P."/>
            <person name="Chao Q."/>
            <person name="Choy N."/>
            <person name="Enju A."/>
            <person name="Goldsmith A.D."/>
            <person name="Gurjal M."/>
            <person name="Hansen N.F."/>
            <person name="Hayashizaki Y."/>
            <person name="Johnson-Hopson C."/>
            <person name="Hsuan V.W."/>
            <person name="Iida K."/>
            <person name="Karnes M."/>
            <person name="Khan S."/>
            <person name="Koesema E."/>
            <person name="Ishida J."/>
            <person name="Jiang P.X."/>
            <person name="Jones T."/>
            <person name="Kawai J."/>
            <person name="Kamiya A."/>
            <person name="Meyers C."/>
            <person name="Nakajima M."/>
            <person name="Narusaka M."/>
            <person name="Seki M."/>
            <person name="Sakurai T."/>
            <person name="Satou M."/>
            <person name="Tamse R."/>
            <person name="Vaysberg M."/>
            <person name="Wallender E.K."/>
            <person name="Wong C."/>
            <person name="Yamamura Y."/>
            <person name="Yuan S."/>
            <person name="Shinozaki K."/>
            <person name="Davis R.W."/>
            <person name="Theologis A."/>
            <person name="Ecker J.R."/>
        </authorList>
    </citation>
    <scope>NUCLEOTIDE SEQUENCE [LARGE SCALE MRNA]</scope>
    <source>
        <strain>cv. Columbia</strain>
    </source>
</reference>
<reference key="5">
    <citation type="journal article" date="1989" name="Plant Mol. Biol.">
        <title>Structural and functional analyses of Arabidopsis thaliana chlorophyll a/b-binding protein (cab) promoters.</title>
        <authorList>
            <person name="Mitra A."/>
            <person name="Choi H.K."/>
            <person name="An G."/>
        </authorList>
    </citation>
    <scope>NUCLEOTIDE SEQUENCE [GENOMIC DNA] OF 1-15</scope>
</reference>
<reference key="6">
    <citation type="journal article" date="1993" name="Plant J.">
        <title>An inventory of 1152 expressed sequence tags obtained by partial sequencing of cDNAs from Arabidopsis thaliana.</title>
        <authorList>
            <person name="Hoefte H."/>
            <person name="Desprez T."/>
            <person name="Amselem J."/>
            <person name="Chiapello H."/>
            <person name="Rouze P."/>
            <person name="Caboche M."/>
            <person name="Moisan A."/>
            <person name="Jourjon M.-F."/>
            <person name="Charpenteau J.-L."/>
            <person name="Berthomieu P."/>
            <person name="Guerrier D."/>
            <person name="Giraudat J."/>
            <person name="Quigley F."/>
            <person name="Thomas F."/>
            <person name="Yu D.-Y."/>
            <person name="Mache R."/>
            <person name="Raynal M."/>
            <person name="Cooke R."/>
            <person name="Grellet F."/>
            <person name="Delseny M."/>
            <person name="Parmentier Y."/>
            <person name="de Marcillac G."/>
            <person name="Gigot C."/>
            <person name="Fleck J."/>
            <person name="Philipps G."/>
            <person name="Axelos M."/>
            <person name="Bardet C."/>
            <person name="Tremousaygue D."/>
            <person name="Lescure B."/>
        </authorList>
    </citation>
    <scope>NUCLEOTIDE SEQUENCE [LARGE SCALE MRNA] OF 219-267</scope>
    <source>
        <strain>cv. Columbia</strain>
        <tissue>Green siliques</tissue>
    </source>
</reference>
<reference key="7">
    <citation type="journal article" date="2001" name="J. Biol. Chem.">
        <title>Mass spectrometric resolution of reversible protein phosphorylation in photosynthetic membranes of Arabidopsis thaliana.</title>
        <authorList>
            <person name="Vener A.V."/>
            <person name="Harms A."/>
            <person name="Sussman M.R."/>
            <person name="Vierstra R.D."/>
        </authorList>
    </citation>
    <scope>PROTEIN SEQUENCE OF 36-43</scope>
    <scope>IDENTIFICATION BY MASS SPECTROMETRY</scope>
    <scope>PHOSPHORYLATION AT THR-38</scope>
    <scope>ACETYLATION AT ARG-36</scope>
    <source>
        <strain>cv. Columbia</strain>
    </source>
</reference>
<keyword id="KW-0002">3D-structure</keyword>
<keyword id="KW-0007">Acetylation</keyword>
<keyword id="KW-0148">Chlorophyll</keyword>
<keyword id="KW-0150">Chloroplast</keyword>
<keyword id="KW-0157">Chromophore</keyword>
<keyword id="KW-0903">Direct protein sequencing</keyword>
<keyword id="KW-0460">Magnesium</keyword>
<keyword id="KW-0472">Membrane</keyword>
<keyword id="KW-0479">Metal-binding</keyword>
<keyword id="KW-0597">Phosphoprotein</keyword>
<keyword id="KW-0602">Photosynthesis</keyword>
<keyword id="KW-0603">Photosystem I</keyword>
<keyword id="KW-0604">Photosystem II</keyword>
<keyword id="KW-0934">Plastid</keyword>
<keyword id="KW-1185">Reference proteome</keyword>
<keyword id="KW-0793">Thylakoid</keyword>
<keyword id="KW-0809">Transit peptide</keyword>
<keyword id="KW-0812">Transmembrane</keyword>
<keyword id="KW-1133">Transmembrane helix</keyword>
<accession>P04778</accession>
<accession>P83754</accession>
<feature type="transit peptide" description="Chloroplast" evidence="5">
    <location>
        <begin position="1"/>
        <end position="35"/>
    </location>
</feature>
<feature type="chain" id="PRO_0000003648" description="Chlorophyll a-b binding protein 1, chloroplastic">
    <location>
        <begin position="36"/>
        <end position="267"/>
    </location>
</feature>
<feature type="transmembrane region" description="Helical" evidence="4">
    <location>
        <begin position="100"/>
        <end position="120"/>
    </location>
</feature>
<feature type="transmembrane region" description="Helical" evidence="4">
    <location>
        <begin position="152"/>
        <end position="172"/>
    </location>
</feature>
<feature type="transmembrane region" description="Helical" evidence="4">
    <location>
        <begin position="221"/>
        <end position="241"/>
    </location>
</feature>
<feature type="binding site" description="axial binding residue" evidence="3">
    <location>
        <position position="58"/>
    </location>
    <ligand>
        <name>chlorophyll b</name>
        <dbReference type="ChEBI" id="CHEBI:61721"/>
        <label>1</label>
    </ligand>
    <ligandPart>
        <name>Mg</name>
        <dbReference type="ChEBI" id="CHEBI:25107"/>
    </ligandPart>
</feature>
<feature type="binding site" evidence="1">
    <location>
        <position position="80"/>
    </location>
    <ligand>
        <name>chlorophyll a</name>
        <dbReference type="ChEBI" id="CHEBI:58416"/>
        <label>1</label>
    </ligand>
</feature>
<feature type="binding site" evidence="1">
    <location>
        <position position="86"/>
    </location>
    <ligand>
        <name>chlorophyll a</name>
        <dbReference type="ChEBI" id="CHEBI:58416"/>
        <label>1</label>
    </ligand>
</feature>
<feature type="binding site" description="axial binding residue" evidence="3">
    <location>
        <position position="99"/>
    </location>
    <ligand>
        <name>chlorophyll a</name>
        <dbReference type="ChEBI" id="CHEBI:58416"/>
        <label>1</label>
    </ligand>
    <ligandPart>
        <name>Mg</name>
        <dbReference type="ChEBI" id="CHEBI:25107"/>
    </ligandPart>
</feature>
<feature type="binding site" description="axial binding residue" evidence="3">
    <location>
        <position position="102"/>
    </location>
    <ligand>
        <name>chlorophyll a</name>
        <dbReference type="ChEBI" id="CHEBI:58416"/>
        <label>2</label>
    </ligand>
    <ligandPart>
        <name>Mg</name>
        <dbReference type="ChEBI" id="CHEBI:25107"/>
    </ligandPart>
</feature>
<feature type="binding site" evidence="1">
    <location>
        <position position="104"/>
    </location>
    <ligand>
        <name>chlorophyll b</name>
        <dbReference type="ChEBI" id="CHEBI:61721"/>
        <label>2</label>
    </ligand>
</feature>
<feature type="binding site" evidence="1">
    <location>
        <position position="137"/>
    </location>
    <ligand>
        <name>chlorophyll a</name>
        <dbReference type="ChEBI" id="CHEBI:58416"/>
        <label>3</label>
    </ligand>
</feature>
<feature type="binding site" evidence="1">
    <location>
        <position position="147"/>
    </location>
    <ligand>
        <name>chlorophyll a</name>
        <dbReference type="ChEBI" id="CHEBI:58416"/>
        <label>3</label>
    </ligand>
</feature>
<feature type="binding site" description="axial binding residue" evidence="3">
    <location>
        <position position="153"/>
    </location>
    <ligand>
        <name>chlorophyll b</name>
        <dbReference type="ChEBI" id="CHEBI:61721"/>
        <label>2</label>
    </ligand>
    <ligandPart>
        <name>Mg</name>
        <dbReference type="ChEBI" id="CHEBI:25107"/>
    </ligandPart>
</feature>
<feature type="binding site" evidence="1">
    <location>
        <position position="157"/>
    </location>
    <ligand>
        <name>chlorophyll b</name>
        <dbReference type="ChEBI" id="CHEBI:61721"/>
        <label>3</label>
    </ligand>
</feature>
<feature type="binding site" evidence="1">
    <location>
        <position position="165"/>
    </location>
    <ligand>
        <name>chlorophyll b</name>
        <dbReference type="ChEBI" id="CHEBI:61721"/>
        <label>4</label>
    </ligand>
</feature>
<feature type="binding site" evidence="2">
    <location>
        <position position="165"/>
    </location>
    <ligand>
        <name>chlorophyll b</name>
        <dbReference type="ChEBI" id="CHEBI:61721"/>
        <label>5</label>
    </ligand>
</feature>
<feature type="binding site" description="axial binding residue" evidence="3">
    <location>
        <position position="173"/>
    </location>
    <ligand>
        <name>chlorophyll b</name>
        <dbReference type="ChEBI" id="CHEBI:61721"/>
        <label>3</label>
    </ligand>
    <ligandPart>
        <name>Mg</name>
        <dbReference type="ChEBI" id="CHEBI:25107"/>
    </ligandPart>
</feature>
<feature type="binding site" evidence="1">
    <location>
        <position position="176"/>
    </location>
    <ligand>
        <name>chlorophyll b</name>
        <dbReference type="ChEBI" id="CHEBI:61721"/>
        <label>4</label>
    </ligand>
</feature>
<feature type="binding site" evidence="1">
    <location>
        <position position="183"/>
    </location>
    <ligand>
        <name>chlorophyll b</name>
        <dbReference type="ChEBI" id="CHEBI:61721"/>
        <label>2</label>
    </ligand>
</feature>
<feature type="binding site" evidence="1">
    <location>
        <position position="214"/>
    </location>
    <ligand>
        <name>chlorophyll a</name>
        <dbReference type="ChEBI" id="CHEBI:58416"/>
        <label>5</label>
    </ligand>
</feature>
<feature type="binding site" description="axial binding residue" evidence="3">
    <location>
        <position position="215"/>
    </location>
    <ligand>
        <name>chlorophyll a</name>
        <dbReference type="ChEBI" id="CHEBI:58416"/>
        <label>3</label>
    </ligand>
    <ligandPart>
        <name>Mg</name>
        <dbReference type="ChEBI" id="CHEBI:25107"/>
    </ligandPart>
</feature>
<feature type="binding site" description="axial binding residue" evidence="3">
    <location>
        <position position="218"/>
    </location>
    <ligand>
        <name>chlorophyll a</name>
        <dbReference type="ChEBI" id="CHEBI:58416"/>
        <label>4</label>
    </ligand>
    <ligandPart>
        <name>Mg</name>
        <dbReference type="ChEBI" id="CHEBI:25107"/>
    </ligandPart>
</feature>
<feature type="binding site" evidence="1">
    <location>
        <position position="220"/>
    </location>
    <ligand>
        <name>chlorophyll a</name>
        <dbReference type="ChEBI" id="CHEBI:58416"/>
        <label>1</label>
    </ligand>
</feature>
<feature type="binding site" description="axial binding residue" evidence="3">
    <location>
        <position position="232"/>
    </location>
    <ligand>
        <name>chlorophyll a</name>
        <dbReference type="ChEBI" id="CHEBI:58416"/>
        <label>5</label>
    </ligand>
    <ligandPart>
        <name>Mg</name>
        <dbReference type="ChEBI" id="CHEBI:25107"/>
    </ligandPart>
</feature>
<feature type="binding site" description="axial binding residue" evidence="3">
    <location>
        <position position="247"/>
    </location>
    <ligand>
        <name>chlorophyll a</name>
        <dbReference type="ChEBI" id="CHEBI:58416"/>
        <label>6</label>
    </ligand>
    <ligandPart>
        <name>Mg</name>
        <dbReference type="ChEBI" id="CHEBI:25107"/>
    </ligandPart>
</feature>
<feature type="binding site" evidence="1">
    <location>
        <position position="256"/>
    </location>
    <ligand>
        <name>chlorophyll a</name>
        <dbReference type="ChEBI" id="CHEBI:58416"/>
        <label>6</label>
    </ligand>
</feature>
<feature type="binding site" evidence="1">
    <location>
        <position position="263"/>
    </location>
    <ligand>
        <name>chlorophyll b</name>
        <dbReference type="ChEBI" id="CHEBI:61721"/>
        <label>5</label>
    </ligand>
</feature>
<feature type="modified residue" description="N2-acetylarginine" evidence="5">
    <location>
        <position position="36"/>
    </location>
</feature>
<feature type="modified residue" description="Phosphothreonine" evidence="5">
    <location>
        <position position="38"/>
    </location>
</feature>
<feature type="turn" evidence="7">
    <location>
        <begin position="60"/>
        <end position="62"/>
    </location>
</feature>
<feature type="helix" evidence="7">
    <location>
        <begin position="89"/>
        <end position="122"/>
    </location>
</feature>
<feature type="helix" evidence="7">
    <location>
        <begin position="131"/>
        <end position="138"/>
    </location>
</feature>
<feature type="helix" evidence="7">
    <location>
        <begin position="146"/>
        <end position="148"/>
    </location>
</feature>
<feature type="helix" evidence="7">
    <location>
        <begin position="158"/>
        <end position="178"/>
    </location>
</feature>
<feature type="strand" evidence="7">
    <location>
        <begin position="181"/>
        <end position="183"/>
    </location>
</feature>
<feature type="helix" evidence="7">
    <location>
        <begin position="194"/>
        <end position="196"/>
    </location>
</feature>
<feature type="helix" evidence="7">
    <location>
        <begin position="205"/>
        <end position="235"/>
    </location>
</feature>
<feature type="helix" evidence="7">
    <location>
        <begin position="240"/>
        <end position="249"/>
    </location>
</feature>
<feature type="turn" evidence="7">
    <location>
        <begin position="256"/>
        <end position="258"/>
    </location>
</feature>
<protein>
    <recommendedName>
        <fullName>Chlorophyll a-b binding protein 1, chloroplastic</fullName>
    </recommendedName>
    <alternativeName>
        <fullName>Chlorophyll a-b protein 140</fullName>
        <shortName>CAB-140</shortName>
    </alternativeName>
    <alternativeName>
        <fullName>LHCII type I CAB-1</fullName>
    </alternativeName>
</protein>
<comment type="function">
    <text>The light-harvesting complex (LHC) functions as a light receptor, it captures and delivers excitation energy to photosystems with which it is closely associated.</text>
</comment>
<comment type="cofactor">
    <text evidence="1">Binds at least 14 chlorophylls (8 Chl-a and 6 Chl-b) and carotenoids such as lutein and neoxanthin.</text>
</comment>
<comment type="subunit">
    <text>The LHC complex consists of chlorophyll a-b binding proteins.</text>
</comment>
<comment type="subcellular location">
    <subcellularLocation>
        <location>Plastid</location>
        <location>Chloroplast thylakoid membrane</location>
        <topology>Multi-pass membrane protein</topology>
    </subcellularLocation>
</comment>
<comment type="domain">
    <text>The N-terminus of the protein extends into the stroma where it is involved with adhesion of granal membranes and post-translational modifications; both are believed to mediate the distribution of excitation energy between photosystems I and II.</text>
</comment>
<comment type="PTM">
    <text evidence="1">Photoregulated by reversible phosphorylation of its threonine residues.</text>
</comment>
<comment type="similarity">
    <text evidence="6">Belongs to the light-harvesting chlorophyll a/b-binding (LHC) protein family.</text>
</comment>
<proteinExistence type="evidence at protein level"/>
<gene>
    <name type="primary">LHCB1.3</name>
    <name type="synonym">AB140</name>
    <name type="synonym">CAB1</name>
    <name type="ordered locus">At1g29930</name>
    <name type="ORF">F1N18.3</name>
</gene>
<sequence length="267" mass="28241">MAASTMALSSPAFAGKAVKLSPAASEVLGSGRVTMRKTVAKPKGPSGSPWYGSDRVKYLGPFSGESPSYLTGEFPGDYGWDTAGLSADPETFARNRELEVIHSRWAMLGALGCVFPELLARNGVKFGEAVWFKAGSQIFSDGGLDYLGNPSLVHAQSILAIWATQVILMGAVEGYRVAGNGPLGEAEDLLYPGGSFDPLGLATDPEAFAELKVKELKNGRLAMFSMFGFFVQAIVTGKGPIENLADHLADPVNNNAWAFATNFVPGK</sequence>